<gene>
    <name type="ORF">CG32809</name>
</gene>
<reference evidence="10" key="1">
    <citation type="journal article" date="2000" name="Science">
        <title>The genome sequence of Drosophila melanogaster.</title>
        <authorList>
            <person name="Adams M.D."/>
            <person name="Celniker S.E."/>
            <person name="Holt R.A."/>
            <person name="Evans C.A."/>
            <person name="Gocayne J.D."/>
            <person name="Amanatides P.G."/>
            <person name="Scherer S.E."/>
            <person name="Li P.W."/>
            <person name="Hoskins R.A."/>
            <person name="Galle R.F."/>
            <person name="George R.A."/>
            <person name="Lewis S.E."/>
            <person name="Richards S."/>
            <person name="Ashburner M."/>
            <person name="Henderson S.N."/>
            <person name="Sutton G.G."/>
            <person name="Wortman J.R."/>
            <person name="Yandell M.D."/>
            <person name="Zhang Q."/>
            <person name="Chen L.X."/>
            <person name="Brandon R.C."/>
            <person name="Rogers Y.-H.C."/>
            <person name="Blazej R.G."/>
            <person name="Champe M."/>
            <person name="Pfeiffer B.D."/>
            <person name="Wan K.H."/>
            <person name="Doyle C."/>
            <person name="Baxter E.G."/>
            <person name="Helt G."/>
            <person name="Nelson C.R."/>
            <person name="Miklos G.L.G."/>
            <person name="Abril J.F."/>
            <person name="Agbayani A."/>
            <person name="An H.-J."/>
            <person name="Andrews-Pfannkoch C."/>
            <person name="Baldwin D."/>
            <person name="Ballew R.M."/>
            <person name="Basu A."/>
            <person name="Baxendale J."/>
            <person name="Bayraktaroglu L."/>
            <person name="Beasley E.M."/>
            <person name="Beeson K.Y."/>
            <person name="Benos P.V."/>
            <person name="Berman B.P."/>
            <person name="Bhandari D."/>
            <person name="Bolshakov S."/>
            <person name="Borkova D."/>
            <person name="Botchan M.R."/>
            <person name="Bouck J."/>
            <person name="Brokstein P."/>
            <person name="Brottier P."/>
            <person name="Burtis K.C."/>
            <person name="Busam D.A."/>
            <person name="Butler H."/>
            <person name="Cadieu E."/>
            <person name="Center A."/>
            <person name="Chandra I."/>
            <person name="Cherry J.M."/>
            <person name="Cawley S."/>
            <person name="Dahlke C."/>
            <person name="Davenport L.B."/>
            <person name="Davies P."/>
            <person name="de Pablos B."/>
            <person name="Delcher A."/>
            <person name="Deng Z."/>
            <person name="Mays A.D."/>
            <person name="Dew I."/>
            <person name="Dietz S.M."/>
            <person name="Dodson K."/>
            <person name="Doup L.E."/>
            <person name="Downes M."/>
            <person name="Dugan-Rocha S."/>
            <person name="Dunkov B.C."/>
            <person name="Dunn P."/>
            <person name="Durbin K.J."/>
            <person name="Evangelista C.C."/>
            <person name="Ferraz C."/>
            <person name="Ferriera S."/>
            <person name="Fleischmann W."/>
            <person name="Fosler C."/>
            <person name="Gabrielian A.E."/>
            <person name="Garg N.S."/>
            <person name="Gelbart W.M."/>
            <person name="Glasser K."/>
            <person name="Glodek A."/>
            <person name="Gong F."/>
            <person name="Gorrell J.H."/>
            <person name="Gu Z."/>
            <person name="Guan P."/>
            <person name="Harris M."/>
            <person name="Harris N.L."/>
            <person name="Harvey D.A."/>
            <person name="Heiman T.J."/>
            <person name="Hernandez J.R."/>
            <person name="Houck J."/>
            <person name="Hostin D."/>
            <person name="Houston K.A."/>
            <person name="Howland T.J."/>
            <person name="Wei M.-H."/>
            <person name="Ibegwam C."/>
            <person name="Jalali M."/>
            <person name="Kalush F."/>
            <person name="Karpen G.H."/>
            <person name="Ke Z."/>
            <person name="Kennison J.A."/>
            <person name="Ketchum K.A."/>
            <person name="Kimmel B.E."/>
            <person name="Kodira C.D."/>
            <person name="Kraft C.L."/>
            <person name="Kravitz S."/>
            <person name="Kulp D."/>
            <person name="Lai Z."/>
            <person name="Lasko P."/>
            <person name="Lei Y."/>
            <person name="Levitsky A.A."/>
            <person name="Li J.H."/>
            <person name="Li Z."/>
            <person name="Liang Y."/>
            <person name="Lin X."/>
            <person name="Liu X."/>
            <person name="Mattei B."/>
            <person name="McIntosh T.C."/>
            <person name="McLeod M.P."/>
            <person name="McPherson D."/>
            <person name="Merkulov G."/>
            <person name="Milshina N.V."/>
            <person name="Mobarry C."/>
            <person name="Morris J."/>
            <person name="Moshrefi A."/>
            <person name="Mount S.M."/>
            <person name="Moy M."/>
            <person name="Murphy B."/>
            <person name="Murphy L."/>
            <person name="Muzny D.M."/>
            <person name="Nelson D.L."/>
            <person name="Nelson D.R."/>
            <person name="Nelson K.A."/>
            <person name="Nixon K."/>
            <person name="Nusskern D.R."/>
            <person name="Pacleb J.M."/>
            <person name="Palazzolo M."/>
            <person name="Pittman G.S."/>
            <person name="Pan S."/>
            <person name="Pollard J."/>
            <person name="Puri V."/>
            <person name="Reese M.G."/>
            <person name="Reinert K."/>
            <person name="Remington K."/>
            <person name="Saunders R.D.C."/>
            <person name="Scheeler F."/>
            <person name="Shen H."/>
            <person name="Shue B.C."/>
            <person name="Siden-Kiamos I."/>
            <person name="Simpson M."/>
            <person name="Skupski M.P."/>
            <person name="Smith T.J."/>
            <person name="Spier E."/>
            <person name="Spradling A.C."/>
            <person name="Stapleton M."/>
            <person name="Strong R."/>
            <person name="Sun E."/>
            <person name="Svirskas R."/>
            <person name="Tector C."/>
            <person name="Turner R."/>
            <person name="Venter E."/>
            <person name="Wang A.H."/>
            <person name="Wang X."/>
            <person name="Wang Z.-Y."/>
            <person name="Wassarman D.A."/>
            <person name="Weinstock G.M."/>
            <person name="Weissenbach J."/>
            <person name="Williams S.M."/>
            <person name="Woodage T."/>
            <person name="Worley K.C."/>
            <person name="Wu D."/>
            <person name="Yang S."/>
            <person name="Yao Q.A."/>
            <person name="Ye J."/>
            <person name="Yeh R.-F."/>
            <person name="Zaveri J.S."/>
            <person name="Zhan M."/>
            <person name="Zhang G."/>
            <person name="Zhao Q."/>
            <person name="Zheng L."/>
            <person name="Zheng X.H."/>
            <person name="Zhong F.N."/>
            <person name="Zhong W."/>
            <person name="Zhou X."/>
            <person name="Zhu S.C."/>
            <person name="Zhu X."/>
            <person name="Smith H.O."/>
            <person name="Gibbs R.A."/>
            <person name="Myers E.W."/>
            <person name="Rubin G.M."/>
            <person name="Venter J.C."/>
        </authorList>
    </citation>
    <scope>NUCLEOTIDE SEQUENCE [LARGE SCALE GENOMIC DNA]</scope>
    <source>
        <strain evidence="3">Berkeley</strain>
    </source>
</reference>
<reference evidence="9 10" key="2">
    <citation type="journal article" date="2002" name="Genome Biol.">
        <title>Annotation of the Drosophila melanogaster euchromatic genome: a systematic review.</title>
        <authorList>
            <person name="Misra S."/>
            <person name="Crosby M.A."/>
            <person name="Mungall C.J."/>
            <person name="Matthews B.B."/>
            <person name="Campbell K.S."/>
            <person name="Hradecky P."/>
            <person name="Huang Y."/>
            <person name="Kaminker J.S."/>
            <person name="Millburn G.H."/>
            <person name="Prochnik S.E."/>
            <person name="Smith C.D."/>
            <person name="Tupy J.L."/>
            <person name="Whitfield E.J."/>
            <person name="Bayraktaroglu L."/>
            <person name="Berman B.P."/>
            <person name="Bettencourt B.R."/>
            <person name="Celniker S.E."/>
            <person name="de Grey A.D.N.J."/>
            <person name="Drysdale R.A."/>
            <person name="Harris N.L."/>
            <person name="Richter J."/>
            <person name="Russo S."/>
            <person name="Schroeder A.J."/>
            <person name="Shu S.Q."/>
            <person name="Stapleton M."/>
            <person name="Yamada C."/>
            <person name="Ashburner M."/>
            <person name="Gelbart W.M."/>
            <person name="Rubin G.M."/>
            <person name="Lewis S.E."/>
        </authorList>
    </citation>
    <scope>GENOME REANNOTATION</scope>
    <scope>ALTERNATIVE SPLICING</scope>
    <source>
        <strain>Berkeley</strain>
    </source>
</reference>
<reference evidence="12" key="3">
    <citation type="journal article" date="2000" name="Science">
        <title>From sequence to chromosome: the tip of the X chromosome of D. melanogaster.</title>
        <authorList>
            <person name="Benos P.V."/>
            <person name="Gatt M.K."/>
            <person name="Ashburner M."/>
            <person name="Murphy L."/>
            <person name="Harris D."/>
            <person name="Barrell B.G."/>
            <person name="Ferraz C."/>
            <person name="Vidal S."/>
            <person name="Brun C."/>
            <person name="Demailles J."/>
            <person name="Cadieu E."/>
            <person name="Dreano S."/>
            <person name="Gloux S."/>
            <person name="Lelaure V."/>
            <person name="Mottier S."/>
            <person name="Galibert F."/>
            <person name="Borkova D."/>
            <person name="Minana B."/>
            <person name="Kafatos F.C."/>
            <person name="Louis C."/>
            <person name="Siden-Kiamos I."/>
            <person name="Bolshakov S."/>
            <person name="Papagiannakis G."/>
            <person name="Spanos L."/>
            <person name="Cox S."/>
            <person name="Madueno E."/>
            <person name="de Pablos B."/>
            <person name="Modolell J."/>
            <person name="Peter A."/>
            <person name="Schoettler P."/>
            <person name="Werner M."/>
            <person name="Mourkioti F."/>
            <person name="Beinert N."/>
            <person name="Dowe G."/>
            <person name="Schaefer U."/>
            <person name="Jaeckle H."/>
            <person name="Bucheton A."/>
            <person name="Callister D.M."/>
            <person name="Campbell L.A."/>
            <person name="Darlamitsou A."/>
            <person name="Henderson N.S."/>
            <person name="McMillan P.J."/>
            <person name="Salles C."/>
            <person name="Tait E.A."/>
            <person name="Valenti P."/>
            <person name="Saunders R.D.C."/>
            <person name="Glover D.M."/>
        </authorList>
    </citation>
    <scope>NUCLEOTIDE SEQUENCE [LARGE SCALE GENOMIC DNA]</scope>
    <source>
        <strain evidence="4">Oregon-R</strain>
    </source>
</reference>
<reference evidence="9 11" key="4">
    <citation type="journal article" date="2002" name="Genome Biol.">
        <title>A Drosophila full-length cDNA resource.</title>
        <authorList>
            <person name="Stapleton M."/>
            <person name="Carlson J.W."/>
            <person name="Brokstein P."/>
            <person name="Yu C."/>
            <person name="Champe M."/>
            <person name="George R.A."/>
            <person name="Guarin H."/>
            <person name="Kronmiller B."/>
            <person name="Pacleb J.M."/>
            <person name="Park S."/>
            <person name="Wan K.H."/>
            <person name="Rubin G.M."/>
            <person name="Celniker S.E."/>
        </authorList>
    </citation>
    <scope>NUCLEOTIDE SEQUENCE [LARGE SCALE MRNA] (ISOFORM B)</scope>
    <scope>NUCLEOTIDE SEQUENCE [LARGE SCALE MRNA] OF 495-1234 (ISOFORM D)</scope>
    <scope>RNA EDITING OF POSITION 179</scope>
    <source>
        <strain evidence="11">Berkeley</strain>
        <tissue evidence="5">Embryo</tissue>
        <tissue evidence="5">Head</tissue>
    </source>
</reference>
<reference evidence="9" key="5">
    <citation type="journal article" date="2006" name="RNA">
        <title>RNA editing in Drosophila melanogaster: new targets and functional consequences.</title>
        <authorList>
            <person name="Stapleton M."/>
            <person name="Carlson J.W."/>
            <person name="Celniker S.E."/>
        </authorList>
    </citation>
    <scope>RNA EDITING OF POSITION 179</scope>
</reference>
<organism>
    <name type="scientific">Drosophila melanogaster</name>
    <name type="common">Fruit fly</name>
    <dbReference type="NCBI Taxonomy" id="7227"/>
    <lineage>
        <taxon>Eukaryota</taxon>
        <taxon>Metazoa</taxon>
        <taxon>Ecdysozoa</taxon>
        <taxon>Arthropoda</taxon>
        <taxon>Hexapoda</taxon>
        <taxon>Insecta</taxon>
        <taxon>Pterygota</taxon>
        <taxon>Neoptera</taxon>
        <taxon>Endopterygota</taxon>
        <taxon>Diptera</taxon>
        <taxon>Brachycera</taxon>
        <taxon>Muscomorpha</taxon>
        <taxon>Ephydroidea</taxon>
        <taxon>Drosophilidae</taxon>
        <taxon>Drosophila</taxon>
        <taxon>Sophophora</taxon>
    </lineage>
</organism>
<evidence type="ECO:0000255" key="1"/>
<evidence type="ECO:0000256" key="2">
    <source>
        <dbReference type="SAM" id="MobiDB-lite"/>
    </source>
</evidence>
<evidence type="ECO:0000269" key="3">
    <source>
    </source>
</evidence>
<evidence type="ECO:0000269" key="4">
    <source>
    </source>
</evidence>
<evidence type="ECO:0000269" key="5">
    <source>
    </source>
</evidence>
<evidence type="ECO:0000269" key="6">
    <source>
    </source>
</evidence>
<evidence type="ECO:0000303" key="7">
    <source>
    </source>
</evidence>
<evidence type="ECO:0000303" key="8">
    <source>
    </source>
</evidence>
<evidence type="ECO:0000305" key="9"/>
<evidence type="ECO:0000312" key="10">
    <source>
        <dbReference type="EMBL" id="AAF45655.2"/>
    </source>
</evidence>
<evidence type="ECO:0000312" key="11">
    <source>
        <dbReference type="EMBL" id="AAL27638.1"/>
    </source>
</evidence>
<evidence type="ECO:0000312" key="12">
    <source>
        <dbReference type="EMBL" id="CAA19834.2"/>
    </source>
</evidence>
<accession>Q7KW14</accession>
<accession>O46062</accession>
<accession>O76897</accession>
<accession>O76919</accession>
<accession>Q8MR25</accession>
<accession>Q95R31</accession>
<accession>Q9W566</accession>
<name>CCDCX_DROME</name>
<protein>
    <recommendedName>
        <fullName>Coiled-coil domain-containing protein CG32809</fullName>
    </recommendedName>
</protein>
<keyword id="KW-0025">Alternative splicing</keyword>
<keyword id="KW-0175">Coiled coil</keyword>
<keyword id="KW-1185">Reference proteome</keyword>
<keyword id="KW-0691">RNA editing</keyword>
<proteinExistence type="evidence at transcript level"/>
<feature type="chain" id="PRO_0000311725" description="Coiled-coil domain-containing protein CG32809">
    <location>
        <begin position="1"/>
        <end position="1234"/>
    </location>
</feature>
<feature type="region of interest" description="Disordered" evidence="2">
    <location>
        <begin position="1"/>
        <end position="88"/>
    </location>
</feature>
<feature type="region of interest" description="Disordered" evidence="2">
    <location>
        <begin position="107"/>
        <end position="129"/>
    </location>
</feature>
<feature type="region of interest" description="Disordered" evidence="2">
    <location>
        <begin position="330"/>
        <end position="350"/>
    </location>
</feature>
<feature type="region of interest" description="Disordered" evidence="2">
    <location>
        <begin position="498"/>
        <end position="548"/>
    </location>
</feature>
<feature type="region of interest" description="Disordered" evidence="2">
    <location>
        <begin position="754"/>
        <end position="793"/>
    </location>
</feature>
<feature type="region of interest" description="Disordered" evidence="2">
    <location>
        <begin position="815"/>
        <end position="852"/>
    </location>
</feature>
<feature type="region of interest" description="Disordered" evidence="2">
    <location>
        <begin position="928"/>
        <end position="1011"/>
    </location>
</feature>
<feature type="region of interest" description="Disordered" evidence="2">
    <location>
        <begin position="1028"/>
        <end position="1070"/>
    </location>
</feature>
<feature type="coiled-coil region" evidence="1">
    <location>
        <begin position="412"/>
        <end position="436"/>
    </location>
</feature>
<feature type="coiled-coil region" evidence="1">
    <location>
        <begin position="565"/>
        <end position="594"/>
    </location>
</feature>
<feature type="coiled-coil region" evidence="1">
    <location>
        <begin position="630"/>
        <end position="666"/>
    </location>
</feature>
<feature type="coiled-coil region" evidence="1">
    <location>
        <begin position="1077"/>
        <end position="1105"/>
    </location>
</feature>
<feature type="compositionally biased region" description="Basic and acidic residues" evidence="2">
    <location>
        <begin position="1"/>
        <end position="11"/>
    </location>
</feature>
<feature type="compositionally biased region" description="Low complexity" evidence="2">
    <location>
        <begin position="12"/>
        <end position="25"/>
    </location>
</feature>
<feature type="compositionally biased region" description="Basic and acidic residues" evidence="2">
    <location>
        <begin position="55"/>
        <end position="69"/>
    </location>
</feature>
<feature type="compositionally biased region" description="Low complexity" evidence="2">
    <location>
        <begin position="817"/>
        <end position="837"/>
    </location>
</feature>
<feature type="compositionally biased region" description="Low complexity" evidence="2">
    <location>
        <begin position="952"/>
        <end position="965"/>
    </location>
</feature>
<feature type="compositionally biased region" description="Low complexity" evidence="2">
    <location>
        <begin position="993"/>
        <end position="1004"/>
    </location>
</feature>
<feature type="compositionally biased region" description="Low complexity" evidence="2">
    <location>
        <begin position="1028"/>
        <end position="1039"/>
    </location>
</feature>
<feature type="compositionally biased region" description="Low complexity" evidence="2">
    <location>
        <begin position="1046"/>
        <end position="1068"/>
    </location>
</feature>
<feature type="splice variant" id="VSP_052617" description="In isoform B." evidence="7 8">
    <original>PIPTPRMGSFALSGG</original>
    <variation>FNWRWSSNFKEAITE</variation>
    <location>
        <begin position="780"/>
        <end position="794"/>
    </location>
</feature>
<feature type="splice variant" id="VSP_052618" description="In isoform B." evidence="7 8">
    <location>
        <begin position="795"/>
        <end position="1234"/>
    </location>
</feature>
<feature type="sequence variant" description="In RNA edited version." evidence="6">
    <original>K</original>
    <variation>R</variation>
    <location>
        <position position="179"/>
    </location>
</feature>
<comment type="alternative products">
    <event type="alternative splicing"/>
    <isoform>
        <id>Q7KW14-1</id>
        <name evidence="3">D</name>
        <sequence type="displayed"/>
    </isoform>
    <isoform>
        <id>Q7KW14-2</id>
        <name evidence="3">B</name>
        <sequence type="described" ref="VSP_052617 VSP_052618"/>
    </isoform>
</comment>
<comment type="RNA editing">
    <location>
        <position position="179" evidence="5 6"/>
    </location>
    <text evidence="6">Partially edited. Target of Adar.</text>
</comment>
<comment type="sequence caution" evidence="9">
    <conflict type="erroneous initiation">
        <sequence resource="EMBL-CDS" id="AAM52678"/>
    </conflict>
</comment>
<comment type="sequence caution" evidence="9">
    <conflict type="erroneous gene model prediction">
        <sequence resource="EMBL-CDS" id="CAA16808"/>
    </conflict>
</comment>
<comment type="sequence caution" evidence="9">
    <conflict type="erroneous gene model prediction">
        <sequence resource="EMBL-CDS" id="CAA19735"/>
    </conflict>
</comment>
<comment type="sequence caution" evidence="9">
    <conflict type="erroneous gene model prediction">
        <sequence resource="EMBL-CDS" id="CAA19834"/>
    </conflict>
</comment>
<sequence length="1234" mass="134461">MLIRWKSKDKSASSNQSVGGSSSSSSKKKRKGREGEEDWQNEAKSGRLPSNEQGGDERRRAMRRDDPRRHTLGGDMLVYGSQHPHAHQMAPQQQRAMDLEMSTRAQKNKKNQPMRGYAPVNQGPLFDDDPGIMSEVETASTGFRRGGKQRSSLPVVRTPSKTLERPLGLVFLQYRSETKRALLPNEITSIDTVRALFVRSFPRQLTMSYLEGPNVKIYIHDASKDMFYELEDVRSHLREIRDRSVLRLFESTEVAAPPQILPGGPGIPQPLPQAQANWDQDQSYFSEPEFDSDYKHQHIHKSKIGKQPAPYYVGSSQTLPRGMYSSERNKVSMDGYTSSPERSSRGNYEEPYYSQYGTRGAVVAPIIDEEQSDGTMTEDQYALYGIKVGPGPNRLTHRGNQIYDPTRPEDLHRIRVEHMERQLANLTGLVQKALVNQNPQIAPLAVPTLDPNYLVVPSQMQANGSGDELYIREKAPKLGKNSCQKSVSFEKSVSFSDDIQGIPKSHNPLHAAETKPTKPAIKSSTLPRTSSQERDRLKPPPPPKPIVLAQTAHPNYRADIALAPEVYNHLRGLQKKAKDLRMEVRTLRRLSQAQAVAVREDIKGTFMRIRATLLASSGSFWDHQGDQDATRISREEELYKQEVIRLEKDLSDLEGSVENLRGEVINRRTRVNMTAVEDMALVLSRASKTVAELKLKFPSLSNGLRCILSNEMEKVVREEKFLKEEPDRLESALRRCKKLTGTLVTLKRLASVQEQRLPPNEPTISEETPRSADISAPDKPIPTPRMGSFALSGGLAPENALDALLDELKTFSKPIAQQQQQQQQQQQQQQQQHQHQQLYEIRPEDSASDESAQAAVQSTVTTQISQARLYTEASVNVQQATTGSMVIAVASGTVSAQAQAQRGVLTHQQSQSQAQLMVHTNMGSLRRLHSYPSESDGELPGPPPTGPRASETSSSTSLANGGSSSKPPVPERNAELITKVGHKRIPPPPPPRTSSRSPLASPTSPNVPPNQAAAATVNLIPNSNSNASANANANANSNATGNKGIVGETTSVVSGDTSSGDNSSGNESGNDHVQRQVALEMRHQELLKKQKMLQEQYQRLQQMSKLPSVDVASSSSSSAQDIASGSNTLRKLGSETNIQQKIAALSLACETSGAAAAAAAAAAAAATNGGVVASDATSGAIGGGGGAGAAGAAGASAAAAHSNSNSNSNLNLNLNSQHQTATTTTKQLYETEIL</sequence>
<dbReference type="EMBL" id="AE014298">
    <property type="protein sequence ID" value="AAF45655.2"/>
    <property type="molecule type" value="Genomic_DNA"/>
</dbReference>
<dbReference type="EMBL" id="AE014298">
    <property type="protein sequence ID" value="AAF45659.3"/>
    <property type="molecule type" value="Genomic_DNA"/>
</dbReference>
<dbReference type="EMBL" id="AL021726">
    <property type="protein sequence ID" value="CAA16808.1"/>
    <property type="status" value="ALT_SEQ"/>
    <property type="molecule type" value="Genomic_DNA"/>
</dbReference>
<dbReference type="EMBL" id="AL031025">
    <property type="protein sequence ID" value="CAA19834.2"/>
    <property type="status" value="ALT_SEQ"/>
    <property type="molecule type" value="Genomic_DNA"/>
</dbReference>
<dbReference type="EMBL" id="AL030993">
    <property type="protein sequence ID" value="CAA19735.1"/>
    <property type="status" value="ALT_SEQ"/>
    <property type="molecule type" value="Genomic_DNA"/>
</dbReference>
<dbReference type="EMBL" id="AY061827">
    <property type="protein sequence ID" value="AAL27638.1"/>
    <property type="molecule type" value="mRNA"/>
</dbReference>
<dbReference type="EMBL" id="AY122166">
    <property type="protein sequence ID" value="AAM52678.1"/>
    <property type="status" value="ALT_INIT"/>
    <property type="molecule type" value="mRNA"/>
</dbReference>
<dbReference type="RefSeq" id="NP_569934.2">
    <molecule id="Q7KW14-1"/>
    <property type="nucleotide sequence ID" value="NM_130578.3"/>
</dbReference>
<dbReference type="RefSeq" id="NP_726755.1">
    <molecule id="Q7KW14-2"/>
    <property type="nucleotide sequence ID" value="NM_166899.2"/>
</dbReference>
<dbReference type="SMR" id="Q7KW14"/>
<dbReference type="BioGRID" id="57672">
    <property type="interactions" value="19"/>
</dbReference>
<dbReference type="FunCoup" id="Q7KW14">
    <property type="interactions" value="155"/>
</dbReference>
<dbReference type="IntAct" id="Q7KW14">
    <property type="interactions" value="6"/>
</dbReference>
<dbReference type="STRING" id="7227.FBpp0300642"/>
<dbReference type="GlyGen" id="Q7KW14">
    <property type="glycosylation" value="1 site"/>
</dbReference>
<dbReference type="PaxDb" id="7227-FBpp0300642"/>
<dbReference type="DNASU" id="31121"/>
<dbReference type="EnsemblMetazoa" id="FBtr0089814">
    <molecule id="Q7KW14-2"/>
    <property type="protein sequence ID" value="FBpp0088755"/>
    <property type="gene ID" value="FBgn0023531"/>
</dbReference>
<dbReference type="EnsemblMetazoa" id="FBtr0089815">
    <molecule id="Q7KW14-1"/>
    <property type="protein sequence ID" value="FBpp0088756"/>
    <property type="gene ID" value="FBgn0023531"/>
</dbReference>
<dbReference type="GeneID" id="31121"/>
<dbReference type="KEGG" id="dme:Dmel_CG32809"/>
<dbReference type="UCSC" id="CG32809-RB">
    <molecule id="Q7KW14-1"/>
    <property type="organism name" value="d. melanogaster"/>
</dbReference>
<dbReference type="AGR" id="FB:FBgn0023531"/>
<dbReference type="FlyBase" id="FBgn0023531">
    <property type="gene designation" value="CG32809"/>
</dbReference>
<dbReference type="VEuPathDB" id="VectorBase:FBgn0023531"/>
<dbReference type="eggNOG" id="ENOG502QUBF">
    <property type="taxonomic scope" value="Eukaryota"/>
</dbReference>
<dbReference type="GeneTree" id="ENSGT00940000169091"/>
<dbReference type="InParanoid" id="Q7KW14"/>
<dbReference type="OrthoDB" id="6022652at2759"/>
<dbReference type="PhylomeDB" id="Q7KW14"/>
<dbReference type="BioGRID-ORCS" id="31121">
    <property type="hits" value="0 hits in 3 CRISPR screens"/>
</dbReference>
<dbReference type="GenomeRNAi" id="31121"/>
<dbReference type="PRO" id="PR:Q7KW14"/>
<dbReference type="Proteomes" id="UP000000803">
    <property type="component" value="Chromosome X"/>
</dbReference>
<dbReference type="Bgee" id="FBgn0023531">
    <property type="expression patterns" value="Expressed in T neuron T2a (Drosophila) in insect head and 197 other cell types or tissues"/>
</dbReference>
<dbReference type="ExpressionAtlas" id="Q7KW14">
    <property type="expression patterns" value="baseline and differential"/>
</dbReference>
<dbReference type="GO" id="GO:0005737">
    <property type="term" value="C:cytoplasm"/>
    <property type="evidence" value="ECO:0000318"/>
    <property type="project" value="GO_Central"/>
</dbReference>
<dbReference type="Gene3D" id="1.20.58.1540">
    <property type="entry name" value="Actin interacting protein 3, C-terminal domain"/>
    <property type="match status" value="1"/>
</dbReference>
<dbReference type="InterPro" id="IPR022782">
    <property type="entry name" value="AIP3-like_C"/>
</dbReference>
<dbReference type="InterPro" id="IPR051825">
    <property type="entry name" value="SRCIN1"/>
</dbReference>
<dbReference type="PANTHER" id="PTHR22741:SF10">
    <property type="entry name" value="COILED-COIL DOMAIN-CONTAINING PROTEIN CG32809"/>
    <property type="match status" value="1"/>
</dbReference>
<dbReference type="PANTHER" id="PTHR22741">
    <property type="entry name" value="P140CAP/SNIP-RELATED"/>
    <property type="match status" value="1"/>
</dbReference>
<dbReference type="Pfam" id="PF03915">
    <property type="entry name" value="AIP3"/>
    <property type="match status" value="2"/>
</dbReference>